<proteinExistence type="inferred from homology"/>
<gene>
    <name evidence="1" type="primary">ectC</name>
    <name type="ordered locus">BAV2372</name>
</gene>
<name>ECTC_BORA1</name>
<evidence type="ECO:0000255" key="1">
    <source>
        <dbReference type="HAMAP-Rule" id="MF_01255"/>
    </source>
</evidence>
<feature type="chain" id="PRO_1000067229" description="L-ectoine synthase">
    <location>
        <begin position="1"/>
        <end position="132"/>
    </location>
</feature>
<protein>
    <recommendedName>
        <fullName evidence="1">L-ectoine synthase</fullName>
        <ecNumber evidence="1">4.2.1.108</ecNumber>
    </recommendedName>
    <alternativeName>
        <fullName evidence="1">N-acetyldiaminobutyrate dehydratase</fullName>
    </alternativeName>
</protein>
<accession>Q2KY19</accession>
<reference key="1">
    <citation type="journal article" date="2006" name="J. Bacteriol.">
        <title>Comparison of the genome sequence of the poultry pathogen Bordetella avium with those of B. bronchiseptica, B. pertussis, and B. parapertussis reveals extensive diversity in surface structures associated with host interaction.</title>
        <authorList>
            <person name="Sebaihia M."/>
            <person name="Preston A."/>
            <person name="Maskell D.J."/>
            <person name="Kuzmiak H."/>
            <person name="Connell T.D."/>
            <person name="King N.D."/>
            <person name="Orndorff P.E."/>
            <person name="Miyamoto D.M."/>
            <person name="Thomson N.R."/>
            <person name="Harris D."/>
            <person name="Goble A."/>
            <person name="Lord A."/>
            <person name="Murphy L."/>
            <person name="Quail M.A."/>
            <person name="Rutter S."/>
            <person name="Squares R."/>
            <person name="Squares S."/>
            <person name="Woodward J."/>
            <person name="Parkhill J."/>
            <person name="Temple L.M."/>
        </authorList>
    </citation>
    <scope>NUCLEOTIDE SEQUENCE [LARGE SCALE GENOMIC DNA]</scope>
    <source>
        <strain>197N</strain>
    </source>
</reference>
<keyword id="KW-0456">Lyase</keyword>
<keyword id="KW-1185">Reference proteome</keyword>
<organism>
    <name type="scientific">Bordetella avium (strain 197N)</name>
    <dbReference type="NCBI Taxonomy" id="360910"/>
    <lineage>
        <taxon>Bacteria</taxon>
        <taxon>Pseudomonadati</taxon>
        <taxon>Pseudomonadota</taxon>
        <taxon>Betaproteobacteria</taxon>
        <taxon>Burkholderiales</taxon>
        <taxon>Alcaligenaceae</taxon>
        <taxon>Bordetella</taxon>
    </lineage>
</organism>
<sequence length="132" mass="14842">MIVRNVKDVIGTPDEVRTDTWVSRRVLLKKDKMGFSFHETTIFPGTRTHIHYKNHLEAVWCIEGDGSIETIADGKRYDLGPGVVYALNEHDEHWLCGGKEPLRVICVFNPPLTGQEVHDADGVYALPQAETA</sequence>
<dbReference type="EC" id="4.2.1.108" evidence="1"/>
<dbReference type="EMBL" id="AM167904">
    <property type="protein sequence ID" value="CAJ49982.1"/>
    <property type="molecule type" value="Genomic_DNA"/>
</dbReference>
<dbReference type="RefSeq" id="WP_012418033.1">
    <property type="nucleotide sequence ID" value="NC_010645.1"/>
</dbReference>
<dbReference type="SMR" id="Q2KY19"/>
<dbReference type="STRING" id="360910.BAV2372"/>
<dbReference type="GeneID" id="92934453"/>
<dbReference type="KEGG" id="bav:BAV2372"/>
<dbReference type="eggNOG" id="COG0662">
    <property type="taxonomic scope" value="Bacteria"/>
</dbReference>
<dbReference type="HOGENOM" id="CLU_154525_0_0_4"/>
<dbReference type="OrthoDB" id="9801830at2"/>
<dbReference type="UniPathway" id="UPA00067">
    <property type="reaction ID" value="UER00123"/>
</dbReference>
<dbReference type="Proteomes" id="UP000001977">
    <property type="component" value="Chromosome"/>
</dbReference>
<dbReference type="GO" id="GO:0033990">
    <property type="term" value="F:ectoine synthase activity"/>
    <property type="evidence" value="ECO:0007669"/>
    <property type="project" value="UniProtKB-EC"/>
</dbReference>
<dbReference type="GO" id="GO:0019491">
    <property type="term" value="P:ectoine biosynthetic process"/>
    <property type="evidence" value="ECO:0007669"/>
    <property type="project" value="UniProtKB-UniRule"/>
</dbReference>
<dbReference type="CDD" id="cd06978">
    <property type="entry name" value="cupin_EctC"/>
    <property type="match status" value="1"/>
</dbReference>
<dbReference type="Gene3D" id="2.60.120.10">
    <property type="entry name" value="Jelly Rolls"/>
    <property type="match status" value="1"/>
</dbReference>
<dbReference type="HAMAP" id="MF_01255">
    <property type="entry name" value="Ectoine_synth"/>
    <property type="match status" value="1"/>
</dbReference>
<dbReference type="InterPro" id="IPR010462">
    <property type="entry name" value="Ectoine_synth"/>
</dbReference>
<dbReference type="InterPro" id="IPR014710">
    <property type="entry name" value="RmlC-like_jellyroll"/>
</dbReference>
<dbReference type="InterPro" id="IPR011051">
    <property type="entry name" value="RmlC_Cupin_sf"/>
</dbReference>
<dbReference type="NCBIfam" id="NF009806">
    <property type="entry name" value="PRK13290.1"/>
    <property type="match status" value="1"/>
</dbReference>
<dbReference type="PANTHER" id="PTHR39289">
    <property type="match status" value="1"/>
</dbReference>
<dbReference type="PANTHER" id="PTHR39289:SF1">
    <property type="entry name" value="L-ECTOINE SYNTHASE"/>
    <property type="match status" value="1"/>
</dbReference>
<dbReference type="Pfam" id="PF06339">
    <property type="entry name" value="Ectoine_synth"/>
    <property type="match status" value="1"/>
</dbReference>
<dbReference type="SUPFAM" id="SSF51182">
    <property type="entry name" value="RmlC-like cupins"/>
    <property type="match status" value="1"/>
</dbReference>
<comment type="function">
    <text evidence="1">Catalyzes the circularization of gamma-N-acetyl-alpha,gamma-diaminobutyric acid (ADABA) to ectoine (1,4,5,6-tetrahydro-2-methyl-4-pyrimidine carboxylic acid), which is an excellent osmoprotectant.</text>
</comment>
<comment type="catalytic activity">
    <reaction evidence="1">
        <text>(2S)-4-acetamido-2-aminobutanoate = L-ectoine + H2O</text>
        <dbReference type="Rhea" id="RHEA:17281"/>
        <dbReference type="ChEBI" id="CHEBI:15377"/>
        <dbReference type="ChEBI" id="CHEBI:58515"/>
        <dbReference type="ChEBI" id="CHEBI:58929"/>
        <dbReference type="EC" id="4.2.1.108"/>
    </reaction>
</comment>
<comment type="pathway">
    <text evidence="1">Amine and polyamine biosynthesis; ectoine biosynthesis; L-ectoine from L-aspartate 4-semialdehyde: step 3/3.</text>
</comment>
<comment type="similarity">
    <text evidence="1">Belongs to the ectoine synthase family.</text>
</comment>